<proteinExistence type="inferred from homology"/>
<name>PUR5_LIMRD</name>
<organism>
    <name type="scientific">Limosilactobacillus reuteri (strain DSM 20016)</name>
    <name type="common">Lactobacillus reuteri</name>
    <dbReference type="NCBI Taxonomy" id="557436"/>
    <lineage>
        <taxon>Bacteria</taxon>
        <taxon>Bacillati</taxon>
        <taxon>Bacillota</taxon>
        <taxon>Bacilli</taxon>
        <taxon>Lactobacillales</taxon>
        <taxon>Lactobacillaceae</taxon>
        <taxon>Limosilactobacillus</taxon>
    </lineage>
</organism>
<sequence length="345" mass="36976">MSRYQDAGVDVNAGYELVHRIKDAVKSTDRPGVIGGIGSFGGMFDLEKLQVQHPILVSGTDGVGTKLLIAQQMNKHDTIGIDVVAMCVNDVLAQGAEPITFLDYIATGHNDPAKMAAIVSGVATGCREAGAALIGGETAEMPDMYAANEYDLAGTVTGIAEKEELLTTAGPQKGDILLGLPSSGLHSNGFSLVRQILFKDNHVKLTDRPEALRGKTVGETILTPTRIYVQAVLPLVHRKLVHGISHITGGGLIENVPRMLGDNLQAVIDPGRWPQLPVFDYLRVLGGLTKEDCFEAFNMGIGMVLAVAPDQVAQVQEILSNKNMTSYQIGYLRHCLPDTKKIVIK</sequence>
<keyword id="KW-0067">ATP-binding</keyword>
<keyword id="KW-0963">Cytoplasm</keyword>
<keyword id="KW-0436">Ligase</keyword>
<keyword id="KW-0547">Nucleotide-binding</keyword>
<keyword id="KW-0658">Purine biosynthesis</keyword>
<keyword id="KW-1185">Reference proteome</keyword>
<feature type="chain" id="PRO_1000062161" description="Phosphoribosylformylglycinamidine cyclo-ligase">
    <location>
        <begin position="1"/>
        <end position="345"/>
    </location>
</feature>
<gene>
    <name evidence="1" type="primary">purM</name>
    <name type="ordered locus">Lreu_0142</name>
</gene>
<evidence type="ECO:0000255" key="1">
    <source>
        <dbReference type="HAMAP-Rule" id="MF_00741"/>
    </source>
</evidence>
<reference key="1">
    <citation type="journal article" date="2011" name="PLoS Genet.">
        <title>The evolution of host specialization in the vertebrate gut symbiont Lactobacillus reuteri.</title>
        <authorList>
            <person name="Frese S.A."/>
            <person name="Benson A.K."/>
            <person name="Tannock G.W."/>
            <person name="Loach D.M."/>
            <person name="Kim J."/>
            <person name="Zhang M."/>
            <person name="Oh P.L."/>
            <person name="Heng N.C."/>
            <person name="Patil P.B."/>
            <person name="Juge N."/>
            <person name="Mackenzie D.A."/>
            <person name="Pearson B.M."/>
            <person name="Lapidus A."/>
            <person name="Dalin E."/>
            <person name="Tice H."/>
            <person name="Goltsman E."/>
            <person name="Land M."/>
            <person name="Hauser L."/>
            <person name="Ivanova N."/>
            <person name="Kyrpides N.C."/>
            <person name="Walter J."/>
        </authorList>
    </citation>
    <scope>NUCLEOTIDE SEQUENCE [LARGE SCALE GENOMIC DNA]</scope>
    <source>
        <strain>DSM 20016</strain>
    </source>
</reference>
<comment type="catalytic activity">
    <reaction evidence="1">
        <text>2-formamido-N(1)-(5-O-phospho-beta-D-ribosyl)acetamidine + ATP = 5-amino-1-(5-phospho-beta-D-ribosyl)imidazole + ADP + phosphate + H(+)</text>
        <dbReference type="Rhea" id="RHEA:23032"/>
        <dbReference type="ChEBI" id="CHEBI:15378"/>
        <dbReference type="ChEBI" id="CHEBI:30616"/>
        <dbReference type="ChEBI" id="CHEBI:43474"/>
        <dbReference type="ChEBI" id="CHEBI:137981"/>
        <dbReference type="ChEBI" id="CHEBI:147287"/>
        <dbReference type="ChEBI" id="CHEBI:456216"/>
        <dbReference type="EC" id="6.3.3.1"/>
    </reaction>
</comment>
<comment type="pathway">
    <text evidence="1">Purine metabolism; IMP biosynthesis via de novo pathway; 5-amino-1-(5-phospho-D-ribosyl)imidazole from N(2)-formyl-N(1)-(5-phospho-D-ribosyl)glycinamide: step 2/2.</text>
</comment>
<comment type="subcellular location">
    <subcellularLocation>
        <location evidence="1">Cytoplasm</location>
    </subcellularLocation>
</comment>
<comment type="similarity">
    <text evidence="1">Belongs to the AIR synthase family.</text>
</comment>
<protein>
    <recommendedName>
        <fullName evidence="1">Phosphoribosylformylglycinamidine cyclo-ligase</fullName>
        <ecNumber evidence="1">6.3.3.1</ecNumber>
    </recommendedName>
    <alternativeName>
        <fullName evidence="1">AIR synthase</fullName>
    </alternativeName>
    <alternativeName>
        <fullName evidence="1">AIRS</fullName>
    </alternativeName>
    <alternativeName>
        <fullName evidence="1">Phosphoribosyl-aminoimidazole synthetase</fullName>
    </alternativeName>
</protein>
<accession>A5VHU0</accession>
<dbReference type="EC" id="6.3.3.1" evidence="1"/>
<dbReference type="EMBL" id="CP000705">
    <property type="protein sequence ID" value="ABQ82414.1"/>
    <property type="molecule type" value="Genomic_DNA"/>
</dbReference>
<dbReference type="RefSeq" id="WP_003669727.1">
    <property type="nucleotide sequence ID" value="NC_009513.1"/>
</dbReference>
<dbReference type="SMR" id="A5VHU0"/>
<dbReference type="STRING" id="557436.Lreu_0142"/>
<dbReference type="KEGG" id="lre:Lreu_0142"/>
<dbReference type="PATRIC" id="fig|557436.17.peg.317"/>
<dbReference type="eggNOG" id="COG0150">
    <property type="taxonomic scope" value="Bacteria"/>
</dbReference>
<dbReference type="HOGENOM" id="CLU_047116_0_0_9"/>
<dbReference type="UniPathway" id="UPA00074">
    <property type="reaction ID" value="UER00129"/>
</dbReference>
<dbReference type="Proteomes" id="UP000001991">
    <property type="component" value="Chromosome"/>
</dbReference>
<dbReference type="GO" id="GO:0005829">
    <property type="term" value="C:cytosol"/>
    <property type="evidence" value="ECO:0007669"/>
    <property type="project" value="TreeGrafter"/>
</dbReference>
<dbReference type="GO" id="GO:0005524">
    <property type="term" value="F:ATP binding"/>
    <property type="evidence" value="ECO:0007669"/>
    <property type="project" value="UniProtKB-KW"/>
</dbReference>
<dbReference type="GO" id="GO:0004637">
    <property type="term" value="F:phosphoribosylamine-glycine ligase activity"/>
    <property type="evidence" value="ECO:0007669"/>
    <property type="project" value="TreeGrafter"/>
</dbReference>
<dbReference type="GO" id="GO:0004641">
    <property type="term" value="F:phosphoribosylformylglycinamidine cyclo-ligase activity"/>
    <property type="evidence" value="ECO:0007669"/>
    <property type="project" value="UniProtKB-UniRule"/>
</dbReference>
<dbReference type="GO" id="GO:0006189">
    <property type="term" value="P:'de novo' IMP biosynthetic process"/>
    <property type="evidence" value="ECO:0007669"/>
    <property type="project" value="UniProtKB-UniRule"/>
</dbReference>
<dbReference type="GO" id="GO:0046084">
    <property type="term" value="P:adenine biosynthetic process"/>
    <property type="evidence" value="ECO:0007669"/>
    <property type="project" value="TreeGrafter"/>
</dbReference>
<dbReference type="CDD" id="cd02196">
    <property type="entry name" value="PurM"/>
    <property type="match status" value="1"/>
</dbReference>
<dbReference type="FunFam" id="3.30.1330.10:FF:000001">
    <property type="entry name" value="Phosphoribosylformylglycinamidine cyclo-ligase"/>
    <property type="match status" value="1"/>
</dbReference>
<dbReference type="FunFam" id="3.90.650.10:FF:000011">
    <property type="entry name" value="Phosphoribosylformylglycinamidine cyclo-ligase"/>
    <property type="match status" value="1"/>
</dbReference>
<dbReference type="Gene3D" id="3.90.650.10">
    <property type="entry name" value="PurM-like C-terminal domain"/>
    <property type="match status" value="1"/>
</dbReference>
<dbReference type="Gene3D" id="3.30.1330.10">
    <property type="entry name" value="PurM-like, N-terminal domain"/>
    <property type="match status" value="1"/>
</dbReference>
<dbReference type="HAMAP" id="MF_00741">
    <property type="entry name" value="AIRS"/>
    <property type="match status" value="1"/>
</dbReference>
<dbReference type="InterPro" id="IPR010918">
    <property type="entry name" value="PurM-like_C_dom"/>
</dbReference>
<dbReference type="InterPro" id="IPR036676">
    <property type="entry name" value="PurM-like_C_sf"/>
</dbReference>
<dbReference type="InterPro" id="IPR016188">
    <property type="entry name" value="PurM-like_N"/>
</dbReference>
<dbReference type="InterPro" id="IPR036921">
    <property type="entry name" value="PurM-like_N_sf"/>
</dbReference>
<dbReference type="InterPro" id="IPR004733">
    <property type="entry name" value="PurM_cligase"/>
</dbReference>
<dbReference type="NCBIfam" id="TIGR00878">
    <property type="entry name" value="purM"/>
    <property type="match status" value="1"/>
</dbReference>
<dbReference type="PANTHER" id="PTHR10520:SF12">
    <property type="entry name" value="TRIFUNCTIONAL PURINE BIOSYNTHETIC PROTEIN ADENOSINE-3"/>
    <property type="match status" value="1"/>
</dbReference>
<dbReference type="PANTHER" id="PTHR10520">
    <property type="entry name" value="TRIFUNCTIONAL PURINE BIOSYNTHETIC PROTEIN ADENOSINE-3-RELATED"/>
    <property type="match status" value="1"/>
</dbReference>
<dbReference type="Pfam" id="PF00586">
    <property type="entry name" value="AIRS"/>
    <property type="match status" value="1"/>
</dbReference>
<dbReference type="Pfam" id="PF02769">
    <property type="entry name" value="AIRS_C"/>
    <property type="match status" value="1"/>
</dbReference>
<dbReference type="SUPFAM" id="SSF56042">
    <property type="entry name" value="PurM C-terminal domain-like"/>
    <property type="match status" value="1"/>
</dbReference>
<dbReference type="SUPFAM" id="SSF55326">
    <property type="entry name" value="PurM N-terminal domain-like"/>
    <property type="match status" value="1"/>
</dbReference>